<comment type="subcellular location">
    <subcellularLocation>
        <location evidence="1">Cytoplasm</location>
    </subcellularLocation>
</comment>
<comment type="similarity">
    <text evidence="1">Belongs to the TACO1 family.</text>
</comment>
<evidence type="ECO:0000255" key="1">
    <source>
        <dbReference type="HAMAP-Rule" id="MF_00693"/>
    </source>
</evidence>
<evidence type="ECO:0000256" key="2">
    <source>
        <dbReference type="SAM" id="MobiDB-lite"/>
    </source>
</evidence>
<organism>
    <name type="scientific">Escherichia coli O6:K15:H31 (strain 536 / UPEC)</name>
    <dbReference type="NCBI Taxonomy" id="362663"/>
    <lineage>
        <taxon>Bacteria</taxon>
        <taxon>Pseudomonadati</taxon>
        <taxon>Pseudomonadota</taxon>
        <taxon>Gammaproteobacteria</taxon>
        <taxon>Enterobacterales</taxon>
        <taxon>Enterobacteriaceae</taxon>
        <taxon>Escherichia</taxon>
    </lineage>
</organism>
<accession>Q0TGW8</accession>
<keyword id="KW-0963">Cytoplasm</keyword>
<keyword id="KW-0238">DNA-binding</keyword>
<keyword id="KW-0804">Transcription</keyword>
<keyword id="KW-0805">Transcription regulation</keyword>
<reference key="1">
    <citation type="journal article" date="2006" name="Mol. Microbiol.">
        <title>Role of pathogenicity island-associated integrases in the genome plasticity of uropathogenic Escherichia coli strain 536.</title>
        <authorList>
            <person name="Hochhut B."/>
            <person name="Wilde C."/>
            <person name="Balling G."/>
            <person name="Middendorf B."/>
            <person name="Dobrindt U."/>
            <person name="Brzuszkiewicz E."/>
            <person name="Gottschalk G."/>
            <person name="Carniel E."/>
            <person name="Hacker J."/>
        </authorList>
    </citation>
    <scope>NUCLEOTIDE SEQUENCE [LARGE SCALE GENOMIC DNA]</scope>
    <source>
        <strain>536 / UPEC</strain>
    </source>
</reference>
<dbReference type="EMBL" id="CP000247">
    <property type="protein sequence ID" value="ABG69811.1"/>
    <property type="molecule type" value="Genomic_DNA"/>
</dbReference>
<dbReference type="RefSeq" id="WP_000907234.1">
    <property type="nucleotide sequence ID" value="NC_008253.1"/>
</dbReference>
<dbReference type="SMR" id="Q0TGW8"/>
<dbReference type="KEGG" id="ecp:ECP_1808"/>
<dbReference type="HOGENOM" id="CLU_062974_2_2_6"/>
<dbReference type="Proteomes" id="UP000009182">
    <property type="component" value="Chromosome"/>
</dbReference>
<dbReference type="GO" id="GO:0005829">
    <property type="term" value="C:cytosol"/>
    <property type="evidence" value="ECO:0007669"/>
    <property type="project" value="TreeGrafter"/>
</dbReference>
<dbReference type="GO" id="GO:0003677">
    <property type="term" value="F:DNA binding"/>
    <property type="evidence" value="ECO:0007669"/>
    <property type="project" value="UniProtKB-UniRule"/>
</dbReference>
<dbReference type="GO" id="GO:0006355">
    <property type="term" value="P:regulation of DNA-templated transcription"/>
    <property type="evidence" value="ECO:0007669"/>
    <property type="project" value="UniProtKB-UniRule"/>
</dbReference>
<dbReference type="FunFam" id="1.10.10.200:FF:000001">
    <property type="entry name" value="Probable transcriptional regulatory protein YebC"/>
    <property type="match status" value="1"/>
</dbReference>
<dbReference type="FunFam" id="3.30.70.980:FF:000002">
    <property type="entry name" value="Probable transcriptional regulatory protein YebC"/>
    <property type="match status" value="1"/>
</dbReference>
<dbReference type="Gene3D" id="1.10.10.200">
    <property type="match status" value="1"/>
</dbReference>
<dbReference type="Gene3D" id="3.30.70.980">
    <property type="match status" value="2"/>
</dbReference>
<dbReference type="HAMAP" id="MF_00693">
    <property type="entry name" value="Transcrip_reg_TACO1"/>
    <property type="match status" value="1"/>
</dbReference>
<dbReference type="InterPro" id="IPR017856">
    <property type="entry name" value="Integrase-like_N"/>
</dbReference>
<dbReference type="InterPro" id="IPR048300">
    <property type="entry name" value="TACO1_YebC-like_2nd/3rd_dom"/>
</dbReference>
<dbReference type="InterPro" id="IPR049083">
    <property type="entry name" value="TACO1_YebC_N"/>
</dbReference>
<dbReference type="InterPro" id="IPR002876">
    <property type="entry name" value="Transcrip_reg_TACO1-like"/>
</dbReference>
<dbReference type="InterPro" id="IPR026564">
    <property type="entry name" value="Transcrip_reg_TACO1-like_dom3"/>
</dbReference>
<dbReference type="InterPro" id="IPR029072">
    <property type="entry name" value="YebC-like"/>
</dbReference>
<dbReference type="NCBIfam" id="NF001030">
    <property type="entry name" value="PRK00110.1"/>
    <property type="match status" value="1"/>
</dbReference>
<dbReference type="NCBIfam" id="NF009044">
    <property type="entry name" value="PRK12378.1"/>
    <property type="match status" value="1"/>
</dbReference>
<dbReference type="NCBIfam" id="TIGR01033">
    <property type="entry name" value="YebC/PmpR family DNA-binding transcriptional regulator"/>
    <property type="match status" value="1"/>
</dbReference>
<dbReference type="PANTHER" id="PTHR12532:SF6">
    <property type="entry name" value="TRANSCRIPTIONAL REGULATORY PROTEIN YEBC-RELATED"/>
    <property type="match status" value="1"/>
</dbReference>
<dbReference type="PANTHER" id="PTHR12532">
    <property type="entry name" value="TRANSLATIONAL ACTIVATOR OF CYTOCHROME C OXIDASE 1"/>
    <property type="match status" value="1"/>
</dbReference>
<dbReference type="Pfam" id="PF20772">
    <property type="entry name" value="TACO1_YebC_N"/>
    <property type="match status" value="1"/>
</dbReference>
<dbReference type="Pfam" id="PF01709">
    <property type="entry name" value="Transcrip_reg"/>
    <property type="match status" value="1"/>
</dbReference>
<dbReference type="SUPFAM" id="SSF75625">
    <property type="entry name" value="YebC-like"/>
    <property type="match status" value="1"/>
</dbReference>
<protein>
    <recommendedName>
        <fullName evidence="1">Probable transcriptional regulatory protein YebC</fullName>
    </recommendedName>
</protein>
<name>YEBC_ECOL5</name>
<sequence>MAGHSKWANTRHRKAAQDAKRGKIFTKIIRELVTAAKLGGGDPDANPRLRAAIDKALSNNMTRDTLNRAIARGVGGDDDANMETIIYEGYGPGGTAIMIECLSDNRNRTVAEVRHAFSKCGGNLGTDGSVAYLFSKKGVISFEKGDEDTIMEAALEAGAEDVVTYDDGAIDVYTAWEEMGKVRDALEAAGLKADSAEVSMIPSTKADMDAETAPKLMRLIDMLEDCDDVQEVYHNGEISDEVAATL</sequence>
<proteinExistence type="inferred from homology"/>
<feature type="chain" id="PRO_0000257064" description="Probable transcriptional regulatory protein YebC">
    <location>
        <begin position="1"/>
        <end position="246"/>
    </location>
</feature>
<feature type="region of interest" description="Disordered" evidence="2">
    <location>
        <begin position="1"/>
        <end position="20"/>
    </location>
</feature>
<gene>
    <name evidence="1" type="primary">yebC</name>
    <name type="ordered locus">ECP_1808</name>
</gene>